<reference key="1">
    <citation type="submission" date="2008-06" db="EMBL/GenBank/DDBJ databases">
        <title>Genome and proteome analysis of A. pleuropneumoniae serotype 7.</title>
        <authorList>
            <person name="Linke B."/>
            <person name="Buettner F."/>
            <person name="Martinez-Arias R."/>
            <person name="Goesmann A."/>
            <person name="Baltes N."/>
            <person name="Tegetmeyer H."/>
            <person name="Singh M."/>
            <person name="Gerlach G.F."/>
        </authorList>
    </citation>
    <scope>NUCLEOTIDE SEQUENCE [LARGE SCALE GENOMIC DNA]</scope>
    <source>
        <strain>AP76</strain>
    </source>
</reference>
<feature type="chain" id="PRO_1000088950" description="Adenine phosphoribosyltransferase">
    <location>
        <begin position="1"/>
        <end position="179"/>
    </location>
</feature>
<sequence length="179" mass="19491">MNQLDLIKSSIKSIPDYPKAGIIFRDITSLLEVPEAFKATVDAIVAEFKDKGITKVVGTESRGFIFGAPVALALGVPFVLVRKPKKLPRAVISQSYALEYGEDTLEIHLDSVKENDNVLMVDDLLATGGTIDATAKLIRRLGGKVEHAAFVIWLPDLGGKERLEKEGINSFTLVEFAGH</sequence>
<protein>
    <recommendedName>
        <fullName evidence="1">Adenine phosphoribosyltransferase</fullName>
        <shortName evidence="1">APRT</shortName>
        <ecNumber evidence="1">2.4.2.7</ecNumber>
    </recommendedName>
</protein>
<accession>B3H0A8</accession>
<proteinExistence type="inferred from homology"/>
<gene>
    <name evidence="1" type="primary">apt</name>
    <name type="ordered locus">APP7_0268</name>
</gene>
<keyword id="KW-0963">Cytoplasm</keyword>
<keyword id="KW-0328">Glycosyltransferase</keyword>
<keyword id="KW-0660">Purine salvage</keyword>
<keyword id="KW-0808">Transferase</keyword>
<organism>
    <name type="scientific">Actinobacillus pleuropneumoniae serotype 7 (strain AP76)</name>
    <dbReference type="NCBI Taxonomy" id="537457"/>
    <lineage>
        <taxon>Bacteria</taxon>
        <taxon>Pseudomonadati</taxon>
        <taxon>Pseudomonadota</taxon>
        <taxon>Gammaproteobacteria</taxon>
        <taxon>Pasteurellales</taxon>
        <taxon>Pasteurellaceae</taxon>
        <taxon>Actinobacillus</taxon>
    </lineage>
</organism>
<name>APT_ACTP7</name>
<comment type="function">
    <text evidence="1">Catalyzes a salvage reaction resulting in the formation of AMP, that is energically less costly than de novo synthesis.</text>
</comment>
<comment type="catalytic activity">
    <reaction evidence="1">
        <text>AMP + diphosphate = 5-phospho-alpha-D-ribose 1-diphosphate + adenine</text>
        <dbReference type="Rhea" id="RHEA:16609"/>
        <dbReference type="ChEBI" id="CHEBI:16708"/>
        <dbReference type="ChEBI" id="CHEBI:33019"/>
        <dbReference type="ChEBI" id="CHEBI:58017"/>
        <dbReference type="ChEBI" id="CHEBI:456215"/>
        <dbReference type="EC" id="2.4.2.7"/>
    </reaction>
</comment>
<comment type="pathway">
    <text evidence="1">Purine metabolism; AMP biosynthesis via salvage pathway; AMP from adenine: step 1/1.</text>
</comment>
<comment type="subunit">
    <text evidence="1">Homodimer.</text>
</comment>
<comment type="subcellular location">
    <subcellularLocation>
        <location evidence="1">Cytoplasm</location>
    </subcellularLocation>
</comment>
<comment type="similarity">
    <text evidence="1">Belongs to the purine/pyrimidine phosphoribosyltransferase family.</text>
</comment>
<evidence type="ECO:0000255" key="1">
    <source>
        <dbReference type="HAMAP-Rule" id="MF_00004"/>
    </source>
</evidence>
<dbReference type="EC" id="2.4.2.7" evidence="1"/>
<dbReference type="EMBL" id="CP001091">
    <property type="protein sequence ID" value="ACE60920.1"/>
    <property type="molecule type" value="Genomic_DNA"/>
</dbReference>
<dbReference type="RefSeq" id="WP_005596155.1">
    <property type="nucleotide sequence ID" value="NC_010939.1"/>
</dbReference>
<dbReference type="SMR" id="B3H0A8"/>
<dbReference type="GeneID" id="48598419"/>
<dbReference type="KEGG" id="apa:APP7_0268"/>
<dbReference type="HOGENOM" id="CLU_063339_3_0_6"/>
<dbReference type="UniPathway" id="UPA00588">
    <property type="reaction ID" value="UER00646"/>
</dbReference>
<dbReference type="Proteomes" id="UP000001226">
    <property type="component" value="Chromosome"/>
</dbReference>
<dbReference type="GO" id="GO:0005829">
    <property type="term" value="C:cytosol"/>
    <property type="evidence" value="ECO:0007669"/>
    <property type="project" value="TreeGrafter"/>
</dbReference>
<dbReference type="GO" id="GO:0003999">
    <property type="term" value="F:adenine phosphoribosyltransferase activity"/>
    <property type="evidence" value="ECO:0007669"/>
    <property type="project" value="UniProtKB-UniRule"/>
</dbReference>
<dbReference type="GO" id="GO:0006168">
    <property type="term" value="P:adenine salvage"/>
    <property type="evidence" value="ECO:0007669"/>
    <property type="project" value="InterPro"/>
</dbReference>
<dbReference type="GO" id="GO:0044209">
    <property type="term" value="P:AMP salvage"/>
    <property type="evidence" value="ECO:0007669"/>
    <property type="project" value="UniProtKB-UniRule"/>
</dbReference>
<dbReference type="GO" id="GO:0006166">
    <property type="term" value="P:purine ribonucleoside salvage"/>
    <property type="evidence" value="ECO:0007669"/>
    <property type="project" value="UniProtKB-KW"/>
</dbReference>
<dbReference type="CDD" id="cd06223">
    <property type="entry name" value="PRTases_typeI"/>
    <property type="match status" value="1"/>
</dbReference>
<dbReference type="FunFam" id="3.40.50.2020:FF:000004">
    <property type="entry name" value="Adenine phosphoribosyltransferase"/>
    <property type="match status" value="1"/>
</dbReference>
<dbReference type="Gene3D" id="3.40.50.2020">
    <property type="match status" value="1"/>
</dbReference>
<dbReference type="HAMAP" id="MF_00004">
    <property type="entry name" value="Aden_phosphoribosyltr"/>
    <property type="match status" value="1"/>
</dbReference>
<dbReference type="InterPro" id="IPR005764">
    <property type="entry name" value="Ade_phspho_trans"/>
</dbReference>
<dbReference type="InterPro" id="IPR050120">
    <property type="entry name" value="Adenine_PRTase"/>
</dbReference>
<dbReference type="InterPro" id="IPR000836">
    <property type="entry name" value="PRibTrfase_dom"/>
</dbReference>
<dbReference type="InterPro" id="IPR029057">
    <property type="entry name" value="PRTase-like"/>
</dbReference>
<dbReference type="NCBIfam" id="TIGR01090">
    <property type="entry name" value="apt"/>
    <property type="match status" value="1"/>
</dbReference>
<dbReference type="NCBIfam" id="NF002632">
    <property type="entry name" value="PRK02304.1-1"/>
    <property type="match status" value="1"/>
</dbReference>
<dbReference type="NCBIfam" id="NF002634">
    <property type="entry name" value="PRK02304.1-3"/>
    <property type="match status" value="1"/>
</dbReference>
<dbReference type="NCBIfam" id="NF002636">
    <property type="entry name" value="PRK02304.1-5"/>
    <property type="match status" value="1"/>
</dbReference>
<dbReference type="PANTHER" id="PTHR11776">
    <property type="entry name" value="ADENINE PHOSPHORIBOSYLTRANSFERASE"/>
    <property type="match status" value="1"/>
</dbReference>
<dbReference type="PANTHER" id="PTHR11776:SF7">
    <property type="entry name" value="PHOSPHORIBOSYLTRANSFERASE DOMAIN-CONTAINING PROTEIN"/>
    <property type="match status" value="1"/>
</dbReference>
<dbReference type="Pfam" id="PF00156">
    <property type="entry name" value="Pribosyltran"/>
    <property type="match status" value="1"/>
</dbReference>
<dbReference type="SUPFAM" id="SSF53271">
    <property type="entry name" value="PRTase-like"/>
    <property type="match status" value="1"/>
</dbReference>
<dbReference type="PROSITE" id="PS00103">
    <property type="entry name" value="PUR_PYR_PR_TRANSFER"/>
    <property type="match status" value="1"/>
</dbReference>